<gene>
    <name type="ordered locus">MT1343</name>
</gene>
<sequence length="161" mass="16895">MTTPAQDAPLVFPSVAFRPVRLFFINVGLAAVAMLVAGVFGHLTVGMFLGLGLLLGLLNALLVRRSAESITAKEHPLKRSMALNSASRLAIITILGLIIAYIFRPAGLGVVFGLAFFQVLLVATTALPVLKKLRTATEEPVATYSSNGQTGGSEGRSASDD</sequence>
<evidence type="ECO:0000255" key="1"/>
<evidence type="ECO:0000256" key="2">
    <source>
        <dbReference type="SAM" id="MobiDB-lite"/>
    </source>
</evidence>
<evidence type="ECO:0000305" key="3"/>
<proteinExistence type="predicted"/>
<comment type="subcellular location">
    <subcellularLocation>
        <location evidence="3">Cell membrane</location>
        <topology evidence="3">Multi-pass membrane protein</topology>
    </subcellularLocation>
</comment>
<comment type="similarity">
    <text evidence="3">To M.leprae ML1138.</text>
</comment>
<organism>
    <name type="scientific">Mycobacterium tuberculosis (strain CDC 1551 / Oshkosh)</name>
    <dbReference type="NCBI Taxonomy" id="83331"/>
    <lineage>
        <taxon>Bacteria</taxon>
        <taxon>Bacillati</taxon>
        <taxon>Actinomycetota</taxon>
        <taxon>Actinomycetes</taxon>
        <taxon>Mycobacteriales</taxon>
        <taxon>Mycobacteriaceae</taxon>
        <taxon>Mycobacterium</taxon>
        <taxon>Mycobacterium tuberculosis complex</taxon>
    </lineage>
</organism>
<reference key="1">
    <citation type="journal article" date="2002" name="J. Bacteriol.">
        <title>Whole-genome comparison of Mycobacterium tuberculosis clinical and laboratory strains.</title>
        <authorList>
            <person name="Fleischmann R.D."/>
            <person name="Alland D."/>
            <person name="Eisen J.A."/>
            <person name="Carpenter L."/>
            <person name="White O."/>
            <person name="Peterson J.D."/>
            <person name="DeBoy R.T."/>
            <person name="Dodson R.J."/>
            <person name="Gwinn M.L."/>
            <person name="Haft D.H."/>
            <person name="Hickey E.K."/>
            <person name="Kolonay J.F."/>
            <person name="Nelson W.C."/>
            <person name="Umayam L.A."/>
            <person name="Ermolaeva M.D."/>
            <person name="Salzberg S.L."/>
            <person name="Delcher A."/>
            <person name="Utterback T.R."/>
            <person name="Weidman J.F."/>
            <person name="Khouri H.M."/>
            <person name="Gill J."/>
            <person name="Mikula A."/>
            <person name="Bishai W."/>
            <person name="Jacobs W.R. Jr."/>
            <person name="Venter J.C."/>
            <person name="Fraser C.M."/>
        </authorList>
    </citation>
    <scope>NUCLEOTIDE SEQUENCE [LARGE SCALE GENOMIC DNA]</scope>
    <source>
        <strain>CDC 1551 / Oshkosh</strain>
    </source>
</reference>
<dbReference type="EMBL" id="AE000516">
    <property type="protein sequence ID" value="AAK45605.1"/>
    <property type="molecule type" value="Genomic_DNA"/>
</dbReference>
<dbReference type="PIR" id="C70774">
    <property type="entry name" value="C70774"/>
</dbReference>
<dbReference type="RefSeq" id="WP_003406680.1">
    <property type="nucleotide sequence ID" value="NZ_KK341227.1"/>
</dbReference>
<dbReference type="KEGG" id="mtc:MT1343"/>
<dbReference type="PATRIC" id="fig|83331.31.peg.1449"/>
<dbReference type="HOGENOM" id="CLU_131482_0_0_11"/>
<dbReference type="Proteomes" id="UP000001020">
    <property type="component" value="Chromosome"/>
</dbReference>
<dbReference type="GO" id="GO:0005886">
    <property type="term" value="C:plasma membrane"/>
    <property type="evidence" value="ECO:0007669"/>
    <property type="project" value="UniProtKB-SubCell"/>
</dbReference>
<dbReference type="InterPro" id="IPR005598">
    <property type="entry name" value="ATP_synth_I"/>
</dbReference>
<dbReference type="Pfam" id="PF03899">
    <property type="entry name" value="ATP-synt_I"/>
    <property type="match status" value="1"/>
</dbReference>
<protein>
    <recommendedName>
        <fullName>Uncharacterized protein MT1343</fullName>
    </recommendedName>
</protein>
<name>Y1303_MYCTO</name>
<keyword id="KW-1003">Cell membrane</keyword>
<keyword id="KW-0472">Membrane</keyword>
<keyword id="KW-1185">Reference proteome</keyword>
<keyword id="KW-0812">Transmembrane</keyword>
<keyword id="KW-1133">Transmembrane helix</keyword>
<feature type="chain" id="PRO_0000427375" description="Uncharacterized protein MT1343">
    <location>
        <begin position="1"/>
        <end position="161"/>
    </location>
</feature>
<feature type="transmembrane region" description="Helical" evidence="1">
    <location>
        <begin position="22"/>
        <end position="42"/>
    </location>
</feature>
<feature type="transmembrane region" description="Helical" evidence="1">
    <location>
        <begin position="43"/>
        <end position="63"/>
    </location>
</feature>
<feature type="transmembrane region" description="Helical" evidence="1">
    <location>
        <begin position="89"/>
        <end position="109"/>
    </location>
</feature>
<feature type="transmembrane region" description="Helical" evidence="1">
    <location>
        <begin position="110"/>
        <end position="130"/>
    </location>
</feature>
<feature type="region of interest" description="Disordered" evidence="2">
    <location>
        <begin position="141"/>
        <end position="161"/>
    </location>
</feature>
<accession>P9WM30</accession>
<accession>L0T7V8</accession>
<accession>P64801</accession>
<accession>Q10619</accession>